<comment type="function">
    <text evidence="1">Converts heme B (protoheme IX) to heme O by substitution of the vinyl group on carbon 2 of heme B porphyrin ring with a hydroxyethyl farnesyl side group.</text>
</comment>
<comment type="catalytic activity">
    <reaction evidence="1">
        <text>heme b + (2E,6E)-farnesyl diphosphate + H2O = Fe(II)-heme o + diphosphate</text>
        <dbReference type="Rhea" id="RHEA:28070"/>
        <dbReference type="ChEBI" id="CHEBI:15377"/>
        <dbReference type="ChEBI" id="CHEBI:33019"/>
        <dbReference type="ChEBI" id="CHEBI:60344"/>
        <dbReference type="ChEBI" id="CHEBI:60530"/>
        <dbReference type="ChEBI" id="CHEBI:175763"/>
        <dbReference type="EC" id="2.5.1.141"/>
    </reaction>
</comment>
<comment type="pathway">
    <text evidence="1">Porphyrin-containing compound metabolism; heme O biosynthesis; heme O from protoheme: step 1/1.</text>
</comment>
<comment type="subunit">
    <text evidence="1">Interacts with CtaA.</text>
</comment>
<comment type="subcellular location">
    <subcellularLocation>
        <location evidence="1">Cell membrane</location>
        <topology evidence="1">Multi-pass membrane protein</topology>
    </subcellularLocation>
</comment>
<comment type="miscellaneous">
    <text evidence="1">Carbon 2 of the heme B porphyrin ring is defined according to the Fischer nomenclature.</text>
</comment>
<comment type="similarity">
    <text evidence="1">Belongs to the UbiA prenyltransferase family. Protoheme IX farnesyltransferase subfamily.</text>
</comment>
<reference key="1">
    <citation type="journal article" date="2009" name="J. Bacteriol.">
        <title>Complete genome sequence of Macrococcus caseolyticus strain JCSCS5402, reflecting the ancestral genome of the human-pathogenic staphylococci.</title>
        <authorList>
            <person name="Baba T."/>
            <person name="Kuwahara-Arai K."/>
            <person name="Uchiyama I."/>
            <person name="Takeuchi F."/>
            <person name="Ito T."/>
            <person name="Hiramatsu K."/>
        </authorList>
    </citation>
    <scope>NUCLEOTIDE SEQUENCE [LARGE SCALE GENOMIC DNA]</scope>
    <source>
        <strain>JCSC5402</strain>
    </source>
</reference>
<proteinExistence type="inferred from homology"/>
<feature type="chain" id="PRO_1000199653" description="Protoheme IX farnesyltransferase">
    <location>
        <begin position="1"/>
        <end position="306"/>
    </location>
</feature>
<feature type="transmembrane region" description="Helical" evidence="1">
    <location>
        <begin position="28"/>
        <end position="48"/>
    </location>
</feature>
<feature type="transmembrane region" description="Helical" evidence="1">
    <location>
        <begin position="53"/>
        <end position="73"/>
    </location>
</feature>
<feature type="transmembrane region" description="Helical" evidence="1">
    <location>
        <begin position="105"/>
        <end position="125"/>
    </location>
</feature>
<feature type="transmembrane region" description="Helical" evidence="1">
    <location>
        <begin position="127"/>
        <end position="147"/>
    </location>
</feature>
<feature type="transmembrane region" description="Helical" evidence="1">
    <location>
        <begin position="156"/>
        <end position="176"/>
    </location>
</feature>
<feature type="transmembrane region" description="Helical" evidence="1">
    <location>
        <begin position="182"/>
        <end position="202"/>
    </location>
</feature>
<feature type="transmembrane region" description="Helical" evidence="1">
    <location>
        <begin position="227"/>
        <end position="244"/>
    </location>
</feature>
<feature type="transmembrane region" description="Helical" evidence="1">
    <location>
        <begin position="246"/>
        <end position="266"/>
    </location>
</feature>
<feature type="transmembrane region" description="Helical" evidence="1">
    <location>
        <begin position="283"/>
        <end position="303"/>
    </location>
</feature>
<name>COXX_MACCJ</name>
<accession>B9EB27</accession>
<protein>
    <recommendedName>
        <fullName evidence="1">Protoheme IX farnesyltransferase</fullName>
        <ecNumber evidence="1">2.5.1.141</ecNumber>
    </recommendedName>
    <alternativeName>
        <fullName evidence="1">Heme B farnesyltransferase</fullName>
    </alternativeName>
    <alternativeName>
        <fullName evidence="1">Heme O synthase</fullName>
    </alternativeName>
</protein>
<dbReference type="EC" id="2.5.1.141" evidence="1"/>
<dbReference type="EMBL" id="AP009484">
    <property type="protein sequence ID" value="BAH17438.1"/>
    <property type="molecule type" value="Genomic_DNA"/>
</dbReference>
<dbReference type="RefSeq" id="WP_012656639.1">
    <property type="nucleotide sequence ID" value="NC_011999.1"/>
</dbReference>
<dbReference type="SMR" id="B9EB27"/>
<dbReference type="STRING" id="458233.MCCL_0731"/>
<dbReference type="GeneID" id="61129373"/>
<dbReference type="KEGG" id="mcl:MCCL_0731"/>
<dbReference type="eggNOG" id="COG0109">
    <property type="taxonomic scope" value="Bacteria"/>
</dbReference>
<dbReference type="HOGENOM" id="CLU_029631_0_0_9"/>
<dbReference type="OrthoDB" id="9814417at2"/>
<dbReference type="UniPathway" id="UPA00834">
    <property type="reaction ID" value="UER00712"/>
</dbReference>
<dbReference type="Proteomes" id="UP000001383">
    <property type="component" value="Chromosome"/>
</dbReference>
<dbReference type="GO" id="GO:0005886">
    <property type="term" value="C:plasma membrane"/>
    <property type="evidence" value="ECO:0007669"/>
    <property type="project" value="UniProtKB-SubCell"/>
</dbReference>
<dbReference type="GO" id="GO:0008495">
    <property type="term" value="F:protoheme IX farnesyltransferase activity"/>
    <property type="evidence" value="ECO:0007669"/>
    <property type="project" value="UniProtKB-UniRule"/>
</dbReference>
<dbReference type="GO" id="GO:0048034">
    <property type="term" value="P:heme O biosynthetic process"/>
    <property type="evidence" value="ECO:0007669"/>
    <property type="project" value="UniProtKB-UniRule"/>
</dbReference>
<dbReference type="CDD" id="cd13957">
    <property type="entry name" value="PT_UbiA_Cox10"/>
    <property type="match status" value="1"/>
</dbReference>
<dbReference type="Gene3D" id="1.10.357.140">
    <property type="entry name" value="UbiA prenyltransferase"/>
    <property type="match status" value="1"/>
</dbReference>
<dbReference type="HAMAP" id="MF_00154">
    <property type="entry name" value="CyoE_CtaB"/>
    <property type="match status" value="1"/>
</dbReference>
<dbReference type="InterPro" id="IPR006369">
    <property type="entry name" value="Protohaem_IX_farnesylTrfase"/>
</dbReference>
<dbReference type="InterPro" id="IPR000537">
    <property type="entry name" value="UbiA_prenyltransferase"/>
</dbReference>
<dbReference type="InterPro" id="IPR044878">
    <property type="entry name" value="UbiA_sf"/>
</dbReference>
<dbReference type="NCBIfam" id="TIGR01473">
    <property type="entry name" value="cyoE_ctaB"/>
    <property type="match status" value="1"/>
</dbReference>
<dbReference type="PANTHER" id="PTHR43448">
    <property type="entry name" value="PROTOHEME IX FARNESYLTRANSFERASE, MITOCHONDRIAL"/>
    <property type="match status" value="1"/>
</dbReference>
<dbReference type="PANTHER" id="PTHR43448:SF2">
    <property type="entry name" value="PROTOHEME IX FARNESYLTRANSFERASE, MITOCHONDRIAL"/>
    <property type="match status" value="1"/>
</dbReference>
<dbReference type="Pfam" id="PF01040">
    <property type="entry name" value="UbiA"/>
    <property type="match status" value="1"/>
</dbReference>
<gene>
    <name evidence="1" type="primary">ctaB</name>
    <name type="ordered locus">MCCL_0731</name>
</gene>
<evidence type="ECO:0000255" key="1">
    <source>
        <dbReference type="HAMAP-Rule" id="MF_00154"/>
    </source>
</evidence>
<sequence length="306" mass="34034">MQNEHILKGVKSVERRLTFKDVKAIVKLGLVQGNLIPAFAGAFIAIMLSGRSFLSSIPELLTMLFGTTLIMAGSCALNNFYDQDIDSIMPSKQNRPSVTGKVSTASILQLSLVLMIVGEMLLFTINIETGIIGFLGIFGYVVLYSVWSKRHLVSNTIIGSFPGAIPPLVGYAAIEPSLSSTAWMLFVIMFIWQPAHFYALAIKRSEEYALAGIPMLPSVKGFKRTRLSMLFWVMLLLPTPFFMQELGTVFMVLASVLNLGWLLLAISGFRSNVKENKWAMTMFVYSLNYLMIFFVMIVVVTLIQTI</sequence>
<keyword id="KW-1003">Cell membrane</keyword>
<keyword id="KW-0350">Heme biosynthesis</keyword>
<keyword id="KW-0472">Membrane</keyword>
<keyword id="KW-1185">Reference proteome</keyword>
<keyword id="KW-0808">Transferase</keyword>
<keyword id="KW-0812">Transmembrane</keyword>
<keyword id="KW-1133">Transmembrane helix</keyword>
<organism>
    <name type="scientific">Macrococcus caseolyticus (strain JCSC5402)</name>
    <name type="common">Macrococcoides caseolyticum</name>
    <dbReference type="NCBI Taxonomy" id="458233"/>
    <lineage>
        <taxon>Bacteria</taxon>
        <taxon>Bacillati</taxon>
        <taxon>Bacillota</taxon>
        <taxon>Bacilli</taxon>
        <taxon>Bacillales</taxon>
        <taxon>Staphylococcaceae</taxon>
        <taxon>Macrococcoides</taxon>
    </lineage>
</organism>